<sequence length="146" mass="15421">MKLHELKAAEGSRKVRNRVGRGTSSGNGKTSGRGQKGQKARSGGGVRLGFEGGQTPLFRRIPKRGFTNINTKEYALVNLDQLNVFDDGTEVTPAILKDAGIVRAEKSGVKVLGNGELTKKLTVKAAKFSKSAEAAIIAKGGSIEVI</sequence>
<proteinExistence type="inferred from homology"/>
<name>RL15_STRPQ</name>
<gene>
    <name evidence="1" type="primary">rplO</name>
    <name type="ordered locus">SPs0061</name>
</gene>
<dbReference type="EMBL" id="BA000034">
    <property type="protein sequence ID" value="BAC63156.1"/>
    <property type="molecule type" value="Genomic_DNA"/>
</dbReference>
<dbReference type="RefSeq" id="WP_002986622.1">
    <property type="nucleotide sequence ID" value="NC_004606.1"/>
</dbReference>
<dbReference type="SMR" id="P0DE07"/>
<dbReference type="GeneID" id="69900045"/>
<dbReference type="KEGG" id="sps:SPs0061"/>
<dbReference type="HOGENOM" id="CLU_055188_4_2_9"/>
<dbReference type="GO" id="GO:0022625">
    <property type="term" value="C:cytosolic large ribosomal subunit"/>
    <property type="evidence" value="ECO:0007669"/>
    <property type="project" value="TreeGrafter"/>
</dbReference>
<dbReference type="GO" id="GO:0019843">
    <property type="term" value="F:rRNA binding"/>
    <property type="evidence" value="ECO:0007669"/>
    <property type="project" value="UniProtKB-UniRule"/>
</dbReference>
<dbReference type="GO" id="GO:0003735">
    <property type="term" value="F:structural constituent of ribosome"/>
    <property type="evidence" value="ECO:0007669"/>
    <property type="project" value="InterPro"/>
</dbReference>
<dbReference type="GO" id="GO:0006412">
    <property type="term" value="P:translation"/>
    <property type="evidence" value="ECO:0007669"/>
    <property type="project" value="UniProtKB-UniRule"/>
</dbReference>
<dbReference type="Gene3D" id="3.100.10.10">
    <property type="match status" value="1"/>
</dbReference>
<dbReference type="HAMAP" id="MF_01341">
    <property type="entry name" value="Ribosomal_uL15"/>
    <property type="match status" value="1"/>
</dbReference>
<dbReference type="InterPro" id="IPR030878">
    <property type="entry name" value="Ribosomal_uL15"/>
</dbReference>
<dbReference type="InterPro" id="IPR021131">
    <property type="entry name" value="Ribosomal_uL15/eL18"/>
</dbReference>
<dbReference type="InterPro" id="IPR036227">
    <property type="entry name" value="Ribosomal_uL15/eL18_sf"/>
</dbReference>
<dbReference type="InterPro" id="IPR005749">
    <property type="entry name" value="Ribosomal_uL15_bac-type"/>
</dbReference>
<dbReference type="InterPro" id="IPR001196">
    <property type="entry name" value="Ribosomal_uL15_CS"/>
</dbReference>
<dbReference type="NCBIfam" id="TIGR01071">
    <property type="entry name" value="rplO_bact"/>
    <property type="match status" value="1"/>
</dbReference>
<dbReference type="PANTHER" id="PTHR12934">
    <property type="entry name" value="50S RIBOSOMAL PROTEIN L15"/>
    <property type="match status" value="1"/>
</dbReference>
<dbReference type="PANTHER" id="PTHR12934:SF11">
    <property type="entry name" value="LARGE RIBOSOMAL SUBUNIT PROTEIN UL15M"/>
    <property type="match status" value="1"/>
</dbReference>
<dbReference type="Pfam" id="PF00828">
    <property type="entry name" value="Ribosomal_L27A"/>
    <property type="match status" value="1"/>
</dbReference>
<dbReference type="SUPFAM" id="SSF52080">
    <property type="entry name" value="Ribosomal proteins L15p and L18e"/>
    <property type="match status" value="1"/>
</dbReference>
<dbReference type="PROSITE" id="PS00475">
    <property type="entry name" value="RIBOSOMAL_L15"/>
    <property type="match status" value="1"/>
</dbReference>
<comment type="function">
    <text evidence="1">Binds to the 23S rRNA.</text>
</comment>
<comment type="subunit">
    <text evidence="1">Part of the 50S ribosomal subunit.</text>
</comment>
<comment type="similarity">
    <text evidence="1">Belongs to the universal ribosomal protein uL15 family.</text>
</comment>
<feature type="chain" id="PRO_0000411493" description="Large ribosomal subunit protein uL15">
    <location>
        <begin position="1"/>
        <end position="146"/>
    </location>
</feature>
<feature type="region of interest" description="Disordered" evidence="2">
    <location>
        <begin position="1"/>
        <end position="51"/>
    </location>
</feature>
<feature type="compositionally biased region" description="Basic and acidic residues" evidence="2">
    <location>
        <begin position="1"/>
        <end position="13"/>
    </location>
</feature>
<feature type="compositionally biased region" description="Gly residues" evidence="2">
    <location>
        <begin position="23"/>
        <end position="35"/>
    </location>
</feature>
<feature type="compositionally biased region" description="Gly residues" evidence="2">
    <location>
        <begin position="42"/>
        <end position="51"/>
    </location>
</feature>
<accession>P0DE07</accession>
<accession>Q79YR1</accession>
<accession>Q7CFK4</accession>
<protein>
    <recommendedName>
        <fullName evidence="1">Large ribosomal subunit protein uL15</fullName>
    </recommendedName>
    <alternativeName>
        <fullName evidence="3">50S ribosomal protein L15</fullName>
    </alternativeName>
</protein>
<reference key="1">
    <citation type="journal article" date="2003" name="Genome Res.">
        <title>Genome sequence of an M3 strain of Streptococcus pyogenes reveals a large-scale genomic rearrangement in invasive strains and new insights into phage evolution.</title>
        <authorList>
            <person name="Nakagawa I."/>
            <person name="Kurokawa K."/>
            <person name="Yamashita A."/>
            <person name="Nakata M."/>
            <person name="Tomiyasu Y."/>
            <person name="Okahashi N."/>
            <person name="Kawabata S."/>
            <person name="Yamazaki K."/>
            <person name="Shiba T."/>
            <person name="Yasunaga T."/>
            <person name="Hayashi H."/>
            <person name="Hattori M."/>
            <person name="Hamada S."/>
        </authorList>
    </citation>
    <scope>NUCLEOTIDE SEQUENCE [LARGE SCALE GENOMIC DNA]</scope>
    <source>
        <strain>SSI-1</strain>
    </source>
</reference>
<keyword id="KW-0687">Ribonucleoprotein</keyword>
<keyword id="KW-0689">Ribosomal protein</keyword>
<keyword id="KW-0694">RNA-binding</keyword>
<keyword id="KW-0699">rRNA-binding</keyword>
<organism>
    <name type="scientific">Streptococcus pyogenes serotype M3 (strain SSI-1)</name>
    <dbReference type="NCBI Taxonomy" id="193567"/>
    <lineage>
        <taxon>Bacteria</taxon>
        <taxon>Bacillati</taxon>
        <taxon>Bacillota</taxon>
        <taxon>Bacilli</taxon>
        <taxon>Lactobacillales</taxon>
        <taxon>Streptococcaceae</taxon>
        <taxon>Streptococcus</taxon>
    </lineage>
</organism>
<evidence type="ECO:0000255" key="1">
    <source>
        <dbReference type="HAMAP-Rule" id="MF_01341"/>
    </source>
</evidence>
<evidence type="ECO:0000256" key="2">
    <source>
        <dbReference type="SAM" id="MobiDB-lite"/>
    </source>
</evidence>
<evidence type="ECO:0000305" key="3"/>